<sequence>MEISVASVTVSVVIAVVTWWVWRTLKWVWFQPKMLESYLRRQGLSGTPYTPLVGDLKRNSKMLTEAISKPIRLNDDITQRVVPYPLQMLKTYGRTHFTWLGPIPAITIMDPELIKEVFNRVYDFQKARLFPLARLIATGLVRYDGDKWAKHRKIINPAFHLEKLKNMVPAFHQCCSEVVGAWDKLVSDKRSSCEVDVWPGLVSMTADMISRTAFGSSYKEGQRIFELQEEIKELLIQSLGKAFIPGYHYLPTKGNRRMKAADREIKVILRGIVNKRLRAREAGEAPSEDLLGILLESNLGQAKGNGMSIEDVMEECKLFYLAGQETTSVLLVWTMVMLSQHQDWQARAREEVKQVFGDKEPNTEGLNQLKVMTMILYEVLRLYPPVTQLPRAIHKEMKLGDMTLPAGVHINLPIMLVQRDTELWGNDAAEFKPERFKDGLSKAAKNQVSFFSFAWGPRICIGQNFALMEAKMAMALILQRFSLELSPSYVHAPYSVITLHPQFGAHLILHKLY</sequence>
<comment type="function">
    <text evidence="3">Catalyzes the oxidation of oleanolate at the C-23 position to form hederagenin.</text>
</comment>
<comment type="catalytic activity">
    <reaction evidence="3">
        <text>oleanolate + reduced [NADPH--hemoprotein reductase] + O2 = hederagenin + oxidized [NADPH--hemoprotein reductase] + H2O + H(+)</text>
        <dbReference type="Rhea" id="RHEA:56488"/>
        <dbReference type="Rhea" id="RHEA-COMP:11964"/>
        <dbReference type="Rhea" id="RHEA-COMP:11965"/>
        <dbReference type="ChEBI" id="CHEBI:15377"/>
        <dbReference type="ChEBI" id="CHEBI:15378"/>
        <dbReference type="ChEBI" id="CHEBI:15379"/>
        <dbReference type="ChEBI" id="CHEBI:57618"/>
        <dbReference type="ChEBI" id="CHEBI:58210"/>
        <dbReference type="ChEBI" id="CHEBI:82828"/>
        <dbReference type="ChEBI" id="CHEBI:140466"/>
    </reaction>
    <physiologicalReaction direction="left-to-right" evidence="3">
        <dbReference type="Rhea" id="RHEA:56489"/>
    </physiologicalReaction>
</comment>
<comment type="cofactor">
    <cofactor evidence="1">
        <name>heme</name>
        <dbReference type="ChEBI" id="CHEBI:30413"/>
    </cofactor>
</comment>
<comment type="subcellular location">
    <subcellularLocation>
        <location evidence="2">Membrane</location>
        <topology evidence="2">Single-pass membrane protein</topology>
    </subcellularLocation>
</comment>
<comment type="similarity">
    <text evidence="5">Belongs to the cytochrome P450 family.</text>
</comment>
<protein>
    <recommendedName>
        <fullName evidence="4">Cytochrome P450 72A552</fullName>
        <ecNumber evidence="3">1.14.14.-</ecNumber>
    </recommendedName>
</protein>
<feature type="chain" id="PRO_0000452134" description="Cytochrome P450 72A552">
    <location>
        <begin position="1"/>
        <end position="513"/>
    </location>
</feature>
<feature type="transmembrane region" description="Helical" evidence="2">
    <location>
        <begin position="2"/>
        <end position="22"/>
    </location>
</feature>
<feature type="binding site" description="axial binding residue" evidence="1">
    <location>
        <position position="460"/>
    </location>
    <ligand>
        <name>heme</name>
        <dbReference type="ChEBI" id="CHEBI:30413"/>
    </ligand>
    <ligandPart>
        <name>Fe</name>
        <dbReference type="ChEBI" id="CHEBI:18248"/>
    </ligandPart>
</feature>
<evidence type="ECO:0000250" key="1">
    <source>
        <dbReference type="UniProtKB" id="Q94IP1"/>
    </source>
</evidence>
<evidence type="ECO:0000255" key="2"/>
<evidence type="ECO:0000269" key="3">
    <source>
    </source>
</evidence>
<evidence type="ECO:0000303" key="4">
    <source>
    </source>
</evidence>
<evidence type="ECO:0000305" key="5"/>
<dbReference type="EC" id="1.14.14.-" evidence="3"/>
<dbReference type="EMBL" id="MH252571">
    <property type="protein sequence ID" value="QAV52438.1"/>
    <property type="molecule type" value="mRNA"/>
</dbReference>
<dbReference type="SMR" id="A0A481NR20"/>
<dbReference type="GO" id="GO:0016020">
    <property type="term" value="C:membrane"/>
    <property type="evidence" value="ECO:0007669"/>
    <property type="project" value="UniProtKB-SubCell"/>
</dbReference>
<dbReference type="GO" id="GO:0020037">
    <property type="term" value="F:heme binding"/>
    <property type="evidence" value="ECO:0007669"/>
    <property type="project" value="InterPro"/>
</dbReference>
<dbReference type="GO" id="GO:0005506">
    <property type="term" value="F:iron ion binding"/>
    <property type="evidence" value="ECO:0007669"/>
    <property type="project" value="InterPro"/>
</dbReference>
<dbReference type="GO" id="GO:0016712">
    <property type="term" value="F:oxidoreductase activity, acting on paired donors, with incorporation or reduction of molecular oxygen, reduced flavin or flavoprotein as one donor, and incorporation of one atom of oxygen"/>
    <property type="evidence" value="ECO:0000314"/>
    <property type="project" value="UniProtKB"/>
</dbReference>
<dbReference type="GO" id="GO:0016134">
    <property type="term" value="P:saponin metabolic process"/>
    <property type="evidence" value="ECO:0000314"/>
    <property type="project" value="UniProtKB"/>
</dbReference>
<dbReference type="CDD" id="cd20642">
    <property type="entry name" value="CYP72"/>
    <property type="match status" value="1"/>
</dbReference>
<dbReference type="FunFam" id="1.10.630.10:FF:000029">
    <property type="entry name" value="Cytochrome P450 734A1"/>
    <property type="match status" value="1"/>
</dbReference>
<dbReference type="Gene3D" id="1.10.630.10">
    <property type="entry name" value="Cytochrome P450"/>
    <property type="match status" value="1"/>
</dbReference>
<dbReference type="InterPro" id="IPR001128">
    <property type="entry name" value="Cyt_P450"/>
</dbReference>
<dbReference type="InterPro" id="IPR002401">
    <property type="entry name" value="Cyt_P450_E_grp-I"/>
</dbReference>
<dbReference type="InterPro" id="IPR036396">
    <property type="entry name" value="Cyt_P450_sf"/>
</dbReference>
<dbReference type="InterPro" id="IPR050665">
    <property type="entry name" value="Cytochrome_P450_Monooxygen"/>
</dbReference>
<dbReference type="PANTHER" id="PTHR24282:SF255">
    <property type="entry name" value="CYTOCHROME P450 72A11-RELATED"/>
    <property type="match status" value="1"/>
</dbReference>
<dbReference type="PANTHER" id="PTHR24282">
    <property type="entry name" value="CYTOCHROME P450 FAMILY MEMBER"/>
    <property type="match status" value="1"/>
</dbReference>
<dbReference type="Pfam" id="PF00067">
    <property type="entry name" value="p450"/>
    <property type="match status" value="1"/>
</dbReference>
<dbReference type="PRINTS" id="PR00463">
    <property type="entry name" value="EP450I"/>
</dbReference>
<dbReference type="PRINTS" id="PR00385">
    <property type="entry name" value="P450"/>
</dbReference>
<dbReference type="SUPFAM" id="SSF48264">
    <property type="entry name" value="Cytochrome P450"/>
    <property type="match status" value="1"/>
</dbReference>
<name>C72A5_BARVU</name>
<accession>A0A481NR20</accession>
<proteinExistence type="evidence at protein level"/>
<organism>
    <name type="scientific">Barbarea vulgaris</name>
    <name type="common">Yellow rocket</name>
    <name type="synonym">Erysimum barbarea</name>
    <dbReference type="NCBI Taxonomy" id="50459"/>
    <lineage>
        <taxon>Eukaryota</taxon>
        <taxon>Viridiplantae</taxon>
        <taxon>Streptophyta</taxon>
        <taxon>Embryophyta</taxon>
        <taxon>Tracheophyta</taxon>
        <taxon>Spermatophyta</taxon>
        <taxon>Magnoliopsida</taxon>
        <taxon>eudicotyledons</taxon>
        <taxon>Gunneridae</taxon>
        <taxon>Pentapetalae</taxon>
        <taxon>rosids</taxon>
        <taxon>malvids</taxon>
        <taxon>Brassicales</taxon>
        <taxon>Brassicaceae</taxon>
        <taxon>Cardamineae</taxon>
        <taxon>Barbarea</taxon>
    </lineage>
</organism>
<reference key="1">
    <citation type="journal article" date="2019" name="New Phytol.">
        <title>The cytochrome P450 CYP72A552 is key to production of hederagenin-based saponins that mediate plant defense against herbivores.</title>
        <authorList>
            <person name="Liu Q."/>
            <person name="Khakimov B."/>
            <person name="Cardenas P.D."/>
            <person name="Cozzi F."/>
            <person name="Olsen C.E."/>
            <person name="Jensen K.R."/>
            <person name="Hauser T.P."/>
            <person name="Bak S."/>
        </authorList>
    </citation>
    <scope>NUCLEOTIDE SEQUENCE [MRNA]</scope>
    <scope>FUNCTION</scope>
    <scope>CATALYTIC ACTIVITY</scope>
</reference>
<gene>
    <name evidence="4" type="primary">CYP72A552</name>
</gene>
<keyword id="KW-0349">Heme</keyword>
<keyword id="KW-0408">Iron</keyword>
<keyword id="KW-0472">Membrane</keyword>
<keyword id="KW-0479">Metal-binding</keyword>
<keyword id="KW-0503">Monooxygenase</keyword>
<keyword id="KW-0560">Oxidoreductase</keyword>
<keyword id="KW-0812">Transmembrane</keyword>
<keyword id="KW-1133">Transmembrane helix</keyword>